<dbReference type="EMBL" id="CP001252">
    <property type="protein sequence ID" value="ACK45885.1"/>
    <property type="molecule type" value="Genomic_DNA"/>
</dbReference>
<dbReference type="RefSeq" id="WP_006082478.1">
    <property type="nucleotide sequence ID" value="NC_011663.1"/>
</dbReference>
<dbReference type="SMR" id="B8E9T1"/>
<dbReference type="GeneID" id="11773200"/>
<dbReference type="KEGG" id="sbp:Sbal223_1377"/>
<dbReference type="HOGENOM" id="CLU_016077_5_1_6"/>
<dbReference type="Proteomes" id="UP000002507">
    <property type="component" value="Chromosome"/>
</dbReference>
<dbReference type="GO" id="GO:0005525">
    <property type="term" value="F:GTP binding"/>
    <property type="evidence" value="ECO:0007669"/>
    <property type="project" value="UniProtKB-UniRule"/>
</dbReference>
<dbReference type="GO" id="GO:0043022">
    <property type="term" value="F:ribosome binding"/>
    <property type="evidence" value="ECO:0007669"/>
    <property type="project" value="TreeGrafter"/>
</dbReference>
<dbReference type="GO" id="GO:0042254">
    <property type="term" value="P:ribosome biogenesis"/>
    <property type="evidence" value="ECO:0007669"/>
    <property type="project" value="UniProtKB-KW"/>
</dbReference>
<dbReference type="CDD" id="cd01894">
    <property type="entry name" value="EngA1"/>
    <property type="match status" value="1"/>
</dbReference>
<dbReference type="CDD" id="cd01895">
    <property type="entry name" value="EngA2"/>
    <property type="match status" value="1"/>
</dbReference>
<dbReference type="FunFam" id="3.30.300.20:FF:000004">
    <property type="entry name" value="GTPase Der"/>
    <property type="match status" value="1"/>
</dbReference>
<dbReference type="FunFam" id="3.40.50.300:FF:000040">
    <property type="entry name" value="GTPase Der"/>
    <property type="match status" value="1"/>
</dbReference>
<dbReference type="FunFam" id="3.40.50.300:FF:000057">
    <property type="entry name" value="GTPase Der"/>
    <property type="match status" value="1"/>
</dbReference>
<dbReference type="Gene3D" id="3.30.300.20">
    <property type="match status" value="1"/>
</dbReference>
<dbReference type="Gene3D" id="3.40.50.300">
    <property type="entry name" value="P-loop containing nucleotide triphosphate hydrolases"/>
    <property type="match status" value="2"/>
</dbReference>
<dbReference type="HAMAP" id="MF_00195">
    <property type="entry name" value="GTPase_Der"/>
    <property type="match status" value="1"/>
</dbReference>
<dbReference type="InterPro" id="IPR031166">
    <property type="entry name" value="G_ENGA"/>
</dbReference>
<dbReference type="InterPro" id="IPR006073">
    <property type="entry name" value="GTP-bd"/>
</dbReference>
<dbReference type="InterPro" id="IPR016484">
    <property type="entry name" value="GTPase_Der"/>
</dbReference>
<dbReference type="InterPro" id="IPR032859">
    <property type="entry name" value="KH_dom-like"/>
</dbReference>
<dbReference type="InterPro" id="IPR015946">
    <property type="entry name" value="KH_dom-like_a/b"/>
</dbReference>
<dbReference type="InterPro" id="IPR027417">
    <property type="entry name" value="P-loop_NTPase"/>
</dbReference>
<dbReference type="InterPro" id="IPR005225">
    <property type="entry name" value="Small_GTP-bd"/>
</dbReference>
<dbReference type="NCBIfam" id="TIGR03594">
    <property type="entry name" value="GTPase_EngA"/>
    <property type="match status" value="1"/>
</dbReference>
<dbReference type="NCBIfam" id="TIGR00231">
    <property type="entry name" value="small_GTP"/>
    <property type="match status" value="2"/>
</dbReference>
<dbReference type="PANTHER" id="PTHR43834">
    <property type="entry name" value="GTPASE DER"/>
    <property type="match status" value="1"/>
</dbReference>
<dbReference type="PANTHER" id="PTHR43834:SF6">
    <property type="entry name" value="GTPASE DER"/>
    <property type="match status" value="1"/>
</dbReference>
<dbReference type="Pfam" id="PF14714">
    <property type="entry name" value="KH_dom-like"/>
    <property type="match status" value="1"/>
</dbReference>
<dbReference type="Pfam" id="PF01926">
    <property type="entry name" value="MMR_HSR1"/>
    <property type="match status" value="2"/>
</dbReference>
<dbReference type="PIRSF" id="PIRSF006485">
    <property type="entry name" value="GTP-binding_EngA"/>
    <property type="match status" value="1"/>
</dbReference>
<dbReference type="PRINTS" id="PR00326">
    <property type="entry name" value="GTP1OBG"/>
</dbReference>
<dbReference type="SUPFAM" id="SSF52540">
    <property type="entry name" value="P-loop containing nucleoside triphosphate hydrolases"/>
    <property type="match status" value="2"/>
</dbReference>
<dbReference type="PROSITE" id="PS51712">
    <property type="entry name" value="G_ENGA"/>
    <property type="match status" value="2"/>
</dbReference>
<name>DER_SHEB2</name>
<evidence type="ECO:0000255" key="1">
    <source>
        <dbReference type="HAMAP-Rule" id="MF_00195"/>
    </source>
</evidence>
<evidence type="ECO:0000256" key="2">
    <source>
        <dbReference type="SAM" id="MobiDB-lite"/>
    </source>
</evidence>
<proteinExistence type="inferred from homology"/>
<comment type="function">
    <text evidence="1">GTPase that plays an essential role in the late steps of ribosome biogenesis.</text>
</comment>
<comment type="subunit">
    <text evidence="1">Associates with the 50S ribosomal subunit.</text>
</comment>
<comment type="similarity">
    <text evidence="1">Belongs to the TRAFAC class TrmE-Era-EngA-EngB-Septin-like GTPase superfamily. EngA (Der) GTPase family.</text>
</comment>
<keyword id="KW-0342">GTP-binding</keyword>
<keyword id="KW-0547">Nucleotide-binding</keyword>
<keyword id="KW-0677">Repeat</keyword>
<keyword id="KW-0690">Ribosome biogenesis</keyword>
<feature type="chain" id="PRO_1000124370" description="GTPase Der">
    <location>
        <begin position="1"/>
        <end position="488"/>
    </location>
</feature>
<feature type="domain" description="EngA-type G 1">
    <location>
        <begin position="3"/>
        <end position="166"/>
    </location>
</feature>
<feature type="domain" description="EngA-type G 2">
    <location>
        <begin position="199"/>
        <end position="372"/>
    </location>
</feature>
<feature type="domain" description="KH-like" evidence="1">
    <location>
        <begin position="373"/>
        <end position="457"/>
    </location>
</feature>
<feature type="region of interest" description="Disordered" evidence="2">
    <location>
        <begin position="460"/>
        <end position="488"/>
    </location>
</feature>
<feature type="compositionally biased region" description="Basic residues" evidence="2">
    <location>
        <begin position="473"/>
        <end position="488"/>
    </location>
</feature>
<feature type="binding site" evidence="1">
    <location>
        <begin position="9"/>
        <end position="16"/>
    </location>
    <ligand>
        <name>GTP</name>
        <dbReference type="ChEBI" id="CHEBI:37565"/>
        <label>1</label>
    </ligand>
</feature>
<feature type="binding site" evidence="1">
    <location>
        <begin position="56"/>
        <end position="60"/>
    </location>
    <ligand>
        <name>GTP</name>
        <dbReference type="ChEBI" id="CHEBI:37565"/>
        <label>1</label>
    </ligand>
</feature>
<feature type="binding site" evidence="1">
    <location>
        <begin position="118"/>
        <end position="121"/>
    </location>
    <ligand>
        <name>GTP</name>
        <dbReference type="ChEBI" id="CHEBI:37565"/>
        <label>1</label>
    </ligand>
</feature>
<feature type="binding site" evidence="1">
    <location>
        <begin position="205"/>
        <end position="212"/>
    </location>
    <ligand>
        <name>GTP</name>
        <dbReference type="ChEBI" id="CHEBI:37565"/>
        <label>2</label>
    </ligand>
</feature>
<feature type="binding site" evidence="1">
    <location>
        <begin position="252"/>
        <end position="256"/>
    </location>
    <ligand>
        <name>GTP</name>
        <dbReference type="ChEBI" id="CHEBI:37565"/>
        <label>2</label>
    </ligand>
</feature>
<feature type="binding site" evidence="1">
    <location>
        <begin position="317"/>
        <end position="320"/>
    </location>
    <ligand>
        <name>GTP</name>
        <dbReference type="ChEBI" id="CHEBI:37565"/>
        <label>2</label>
    </ligand>
</feature>
<reference key="1">
    <citation type="submission" date="2008-12" db="EMBL/GenBank/DDBJ databases">
        <title>Complete sequence of chromosome of Shewanella baltica OS223.</title>
        <authorList>
            <consortium name="US DOE Joint Genome Institute"/>
            <person name="Lucas S."/>
            <person name="Copeland A."/>
            <person name="Lapidus A."/>
            <person name="Glavina del Rio T."/>
            <person name="Dalin E."/>
            <person name="Tice H."/>
            <person name="Bruce D."/>
            <person name="Goodwin L."/>
            <person name="Pitluck S."/>
            <person name="Chertkov O."/>
            <person name="Meincke L."/>
            <person name="Brettin T."/>
            <person name="Detter J.C."/>
            <person name="Han C."/>
            <person name="Kuske C.R."/>
            <person name="Larimer F."/>
            <person name="Land M."/>
            <person name="Hauser L."/>
            <person name="Kyrpides N."/>
            <person name="Ovchinnikova G."/>
            <person name="Brettar I."/>
            <person name="Rodrigues J."/>
            <person name="Konstantinidis K."/>
            <person name="Tiedje J."/>
        </authorList>
    </citation>
    <scope>NUCLEOTIDE SEQUENCE [LARGE SCALE GENOMIC DNA]</scope>
    <source>
        <strain>OS223</strain>
    </source>
</reference>
<gene>
    <name evidence="1" type="primary">der</name>
    <name type="synonym">engA</name>
    <name type="ordered locus">Sbal223_1377</name>
</gene>
<protein>
    <recommendedName>
        <fullName evidence="1">GTPase Der</fullName>
    </recommendedName>
    <alternativeName>
        <fullName evidence="1">GTP-binding protein EngA</fullName>
    </alternativeName>
</protein>
<accession>B8E9T1</accession>
<sequence>MIPVVALVGRPNVGKSTLFNRLTRTRDALVADFPGLTRDRKYGRAFLSGYEFIVVDTGGIDGTEEGIETKMAEQSLAAIEEADVVLFMTDARAGLTAADLSIAQHLRSREKTTFVVANKVDGIDADSACAEFWSLGLGEVYQMAASQGRGVTNMIEYALTPYAEAMGIVRQGEDEVTEEREYTEEEAEAEQKRLQDLPIKLAIIGKPNVGKSTLTNRILGEERVVVFDEPGTTRDSIYIPMEREGREYVIIDTAGVRRRSKVHQVIEKFSVIKTLKAVEDANVVLLIIDAREGIAEQDLGLLGFALNAGRALVIAVNKWDGIDQGIKDRVKSELDRRLGFIDFARIHFISALHGTGVGHLFESIEEAYDSATRRVSTSMLTRIMQMSQDDHQPPLVNGRRVKLKYAHAGGYNPPIVVIHGNQVSRLPDSYKRYMMNYFRRSLKVVGTPIQLRFQEGDNPFENKTEKLTMSQERRRKRAQSHIKDRKTK</sequence>
<organism>
    <name type="scientific">Shewanella baltica (strain OS223)</name>
    <dbReference type="NCBI Taxonomy" id="407976"/>
    <lineage>
        <taxon>Bacteria</taxon>
        <taxon>Pseudomonadati</taxon>
        <taxon>Pseudomonadota</taxon>
        <taxon>Gammaproteobacteria</taxon>
        <taxon>Alteromonadales</taxon>
        <taxon>Shewanellaceae</taxon>
        <taxon>Shewanella</taxon>
    </lineage>
</organism>